<accession>Q2KI08</accession>
<evidence type="ECO:0000250" key="1"/>
<evidence type="ECO:0000255" key="2"/>
<evidence type="ECO:0000305" key="3"/>
<protein>
    <recommendedName>
        <fullName>Mitochondrial import receptor subunit TOM7 homolog</fullName>
    </recommendedName>
    <alternativeName>
        <fullName>Translocase of outer membrane 7 kDa subunit homolog</fullName>
    </alternativeName>
</protein>
<dbReference type="EMBL" id="BC112813">
    <property type="protein sequence ID" value="AAI12814.1"/>
    <property type="molecule type" value="mRNA"/>
</dbReference>
<dbReference type="RefSeq" id="NP_001106777.1">
    <property type="nucleotide sequence ID" value="NM_001113306.2"/>
</dbReference>
<dbReference type="SMR" id="Q2KI08"/>
<dbReference type="FunCoup" id="Q2KI08">
    <property type="interactions" value="702"/>
</dbReference>
<dbReference type="STRING" id="9913.ENSBTAP00000059589"/>
<dbReference type="PaxDb" id="9913-ENSBTAP00000008388"/>
<dbReference type="GeneID" id="614074"/>
<dbReference type="KEGG" id="bta:614074"/>
<dbReference type="CTD" id="54543"/>
<dbReference type="VEuPathDB" id="HostDB:ENSBTAG00000051150"/>
<dbReference type="eggNOG" id="KOG4449">
    <property type="taxonomic scope" value="Eukaryota"/>
</dbReference>
<dbReference type="InParanoid" id="Q2KI08"/>
<dbReference type="OMA" id="LMNLLWQ"/>
<dbReference type="OrthoDB" id="284357at2759"/>
<dbReference type="Reactome" id="R-BTA-5205685">
    <property type="pathway name" value="PINK1-PRKN Mediated Mitophagy"/>
</dbReference>
<dbReference type="Proteomes" id="UP000009136">
    <property type="component" value="Chromosome 4"/>
</dbReference>
<dbReference type="Bgee" id="ENSBTAG00000051150">
    <property type="expression patterns" value="Expressed in oocyte and 106 other cell types or tissues"/>
</dbReference>
<dbReference type="GO" id="GO:0005742">
    <property type="term" value="C:mitochondrial outer membrane translocase complex"/>
    <property type="evidence" value="ECO:0000318"/>
    <property type="project" value="GO_Central"/>
</dbReference>
<dbReference type="GO" id="GO:1903955">
    <property type="term" value="P:positive regulation of protein targeting to mitochondrion"/>
    <property type="evidence" value="ECO:0000318"/>
    <property type="project" value="GO_Central"/>
</dbReference>
<dbReference type="GO" id="GO:0030150">
    <property type="term" value="P:protein import into mitochondrial matrix"/>
    <property type="evidence" value="ECO:0007669"/>
    <property type="project" value="InterPro"/>
</dbReference>
<dbReference type="InterPro" id="IPR012621">
    <property type="entry name" value="Tom7"/>
</dbReference>
<dbReference type="PANTHER" id="PTHR46722">
    <property type="entry name" value="MITOCHONDRIAL IMPORT RECEPTOR SUBUNIT TOM7 HOMOLOG"/>
    <property type="match status" value="1"/>
</dbReference>
<dbReference type="PANTHER" id="PTHR46722:SF1">
    <property type="entry name" value="MITOCHONDRIAL IMPORT RECEPTOR SUBUNIT TOM7 HOMOLOG"/>
    <property type="match status" value="1"/>
</dbReference>
<dbReference type="Pfam" id="PF08038">
    <property type="entry name" value="Tom7"/>
    <property type="match status" value="1"/>
</dbReference>
<proteinExistence type="inferred from homology"/>
<reference key="1">
    <citation type="submission" date="2006-01" db="EMBL/GenBank/DDBJ databases">
        <authorList>
            <consortium name="NIH - Mammalian Gene Collection (MGC) project"/>
        </authorList>
    </citation>
    <scope>NUCLEOTIDE SEQUENCE [LARGE SCALE MRNA]</scope>
    <source>
        <strain>Hereford</strain>
        <tissue>Heart ventricle</tissue>
    </source>
</reference>
<keyword id="KW-0472">Membrane</keyword>
<keyword id="KW-0496">Mitochondrion</keyword>
<keyword id="KW-1000">Mitochondrion outer membrane</keyword>
<keyword id="KW-0653">Protein transport</keyword>
<keyword id="KW-1185">Reference proteome</keyword>
<keyword id="KW-0812">Transmembrane</keyword>
<keyword id="KW-1133">Transmembrane helix</keyword>
<keyword id="KW-0813">Transport</keyword>
<feature type="chain" id="PRO_0000244460" description="Mitochondrial import receptor subunit TOM7 homolog">
    <location>
        <begin position="1"/>
        <end position="55"/>
    </location>
</feature>
<feature type="topological domain" description="Cytoplasmic" evidence="1">
    <location>
        <begin position="1"/>
        <end position="20"/>
    </location>
</feature>
<feature type="transmembrane region" description="Helical" evidence="2">
    <location>
        <begin position="21"/>
        <end position="36"/>
    </location>
</feature>
<feature type="topological domain" description="Mitochondrial intermembrane" evidence="1">
    <location>
        <begin position="37"/>
        <end position="55"/>
    </location>
</feature>
<name>TOM7_BOVIN</name>
<sequence>MVKLSKEAKQRLQQLFKGGQFAIRWGFIPLVIYLGFKRGADPGMPEPTVLSLLWG</sequence>
<gene>
    <name type="primary">TOMM7</name>
</gene>
<organism>
    <name type="scientific">Bos taurus</name>
    <name type="common">Bovine</name>
    <dbReference type="NCBI Taxonomy" id="9913"/>
    <lineage>
        <taxon>Eukaryota</taxon>
        <taxon>Metazoa</taxon>
        <taxon>Chordata</taxon>
        <taxon>Craniata</taxon>
        <taxon>Vertebrata</taxon>
        <taxon>Euteleostomi</taxon>
        <taxon>Mammalia</taxon>
        <taxon>Eutheria</taxon>
        <taxon>Laurasiatheria</taxon>
        <taxon>Artiodactyla</taxon>
        <taxon>Ruminantia</taxon>
        <taxon>Pecora</taxon>
        <taxon>Bovidae</taxon>
        <taxon>Bovinae</taxon>
        <taxon>Bos</taxon>
    </lineage>
</organism>
<comment type="function">
    <text evidence="1">Required for assembly and stability of the TOM complex (By similarity). Positive regulator of PRKN translocation to damaged mitochondria. Acts probably by stabilizing PINK1 on the outer membrane of depolarized mitochondria (By similarity).</text>
</comment>
<comment type="subunit">
    <text evidence="1">Forms part of the preprotein translocase complex of the outer mitochondrial membrane (TOM complex) which consists of at least 7 different proteins (TOMM5, TOMM6, TOMM7, TOMM20, TOMM22, TOMM40 and TOMM70).</text>
</comment>
<comment type="subcellular location">
    <subcellularLocation>
        <location evidence="1">Mitochondrion outer membrane</location>
        <topology evidence="1">Single-pass membrane protein</topology>
    </subcellularLocation>
</comment>
<comment type="similarity">
    <text evidence="3">Belongs to the Tom7 family.</text>
</comment>